<protein>
    <recommendedName>
        <fullName evidence="1">Multidrug resistance protein MdtC</fullName>
    </recommendedName>
    <alternativeName>
        <fullName evidence="1">Multidrug transporter MdtC</fullName>
    </alternativeName>
</protein>
<gene>
    <name evidence="1" type="primary">mdtC</name>
    <name type="ordered locus">PAJ_1810</name>
</gene>
<sequence length="1025" mass="110488">MKFFALFIHRPVATTLLTLAIALAGILGFRLLPVAPLPQVDFPVIMVSASLPGASPETMASSVATPLERSLGRIAGVSEMTSTSSLGSTRIIMVFDFDRDINGAARDVQAAINAAQSLLPTGMPSRPTYRKANPSDAPIMIMTLTSDLYSPAQLYDYASTQLAQKLSQINGVGDVTVGGSSLPAVRVALNPQALFNQGVSLDAVRQTISNANQRRPQGAVEDGQQRWQLRTNDALQTASEYQPLVVHYNNGAAVRLSDVATVQDSVQDVRNAGMSRGKPAVLLVIRKTADANVIETVDRIRAELPELHEIIPAAINLEVAQDRSPTIRASLEEVEQSLMIAVALVILVVFVFLRSGRATLIPAVAVPVSLIGTFAAMYLCGFSLNNLSLMALTIATGFVVDDAIVVLENIARHVEAGMKPMAAALKGVREVGFTVLSMSLSLIAVFLPLLMTGGLIGRFFAEFSITLSVAILISLFVSVTLTPMMCAYLLKPHAPRSQPQRRGVGRLLLAVQRGYARSLTVVLNHARWVLLLLLGTVALTVWLFISIPKTFLPEQDTGRLSGFISADQSISFQAMRGKLEDFMKIVGADPDVSSVVGFTGGMRTNMGLMFISLKPLSERKDTAQAVIARLRAKLANEPGANLYLNAVQDIRVGGREANASYQYSLLSDDLAALRTWEPKIRQAFTALPELADVNSDQQDKGSEMALTYDRASMARLGINVSEANALLNDAFGQRQISTIYQPLNQYKVVMEVDPRYTQDISALNQMFVINSEGKPIPLAWFAKWQPANAPLSVNHEGLSAASTISFNLPEGVSLSQASEAIERTMTALGVPSSVRGSFAGTAQAFQQSQSSQLWLMLAAIAAVYIVLGILYESYVHPLTILSTLPSAGVGALLALALFDTPFSLIALIGILLLIGIVKKNAIMMVDFALEAERNGNLSPRDAIFQACLLRFRPILMTTLAALFGALPLVLTSGDGAELRQPLGITIAGGLIMSQLLTLYTTPVVYLMMDKLRRKKRTQTINATQH</sequence>
<organism>
    <name type="scientific">Pantoea ananatis (strain AJ13355)</name>
    <dbReference type="NCBI Taxonomy" id="932677"/>
    <lineage>
        <taxon>Bacteria</taxon>
        <taxon>Pseudomonadati</taxon>
        <taxon>Pseudomonadota</taxon>
        <taxon>Gammaproteobacteria</taxon>
        <taxon>Enterobacterales</taxon>
        <taxon>Erwiniaceae</taxon>
        <taxon>Pantoea</taxon>
    </lineage>
</organism>
<reference key="1">
    <citation type="journal article" date="2012" name="Appl. Microbiol. Biotechnol.">
        <title>The complete genome sequence of Pantoea ananatis AJ13355, an organism with great biotechnological potential.</title>
        <authorList>
            <person name="Hara Y."/>
            <person name="Kadotani N."/>
            <person name="Izui H."/>
            <person name="Katashkina J.I."/>
            <person name="Kuvaeva T.M."/>
            <person name="Andreeva I.G."/>
            <person name="Golubeva L.I."/>
            <person name="Malko D.B."/>
            <person name="Makeev V.J."/>
            <person name="Mashko S.V."/>
            <person name="Kozlov Y.I."/>
        </authorList>
    </citation>
    <scope>NUCLEOTIDE SEQUENCE [LARGE SCALE GENOMIC DNA]</scope>
    <source>
        <strain>AJ13355</strain>
    </source>
</reference>
<evidence type="ECO:0000255" key="1">
    <source>
        <dbReference type="HAMAP-Rule" id="MF_01424"/>
    </source>
</evidence>
<evidence type="ECO:0000305" key="2"/>
<keyword id="KW-0997">Cell inner membrane</keyword>
<keyword id="KW-1003">Cell membrane</keyword>
<keyword id="KW-0472">Membrane</keyword>
<keyword id="KW-0812">Transmembrane</keyword>
<keyword id="KW-1133">Transmembrane helix</keyword>
<keyword id="KW-0813">Transport</keyword>
<name>MDTC_PANAA</name>
<proteinExistence type="inferred from homology"/>
<feature type="chain" id="PRO_0000414035" description="Multidrug resistance protein MdtC">
    <location>
        <begin position="1"/>
        <end position="1025"/>
    </location>
</feature>
<feature type="transmembrane region" description="Helical" evidence="1">
    <location>
        <begin position="16"/>
        <end position="36"/>
    </location>
</feature>
<feature type="transmembrane region" description="Helical" evidence="1">
    <location>
        <begin position="333"/>
        <end position="353"/>
    </location>
</feature>
<feature type="transmembrane region" description="Helical" evidence="1">
    <location>
        <begin position="360"/>
        <end position="380"/>
    </location>
</feature>
<feature type="transmembrane region" description="Helical" evidence="1">
    <location>
        <begin position="387"/>
        <end position="407"/>
    </location>
</feature>
<feature type="transmembrane region" description="Helical" evidence="1">
    <location>
        <begin position="431"/>
        <end position="451"/>
    </location>
</feature>
<feature type="transmembrane region" description="Helical" evidence="1">
    <location>
        <begin position="459"/>
        <end position="479"/>
    </location>
</feature>
<feature type="transmembrane region" description="Helical" evidence="1">
    <location>
        <begin position="528"/>
        <end position="548"/>
    </location>
</feature>
<feature type="transmembrane region" description="Helical" evidence="1">
    <location>
        <begin position="853"/>
        <end position="873"/>
    </location>
</feature>
<feature type="transmembrane region" description="Helical" evidence="1">
    <location>
        <begin position="875"/>
        <end position="895"/>
    </location>
</feature>
<feature type="transmembrane region" description="Helical" evidence="1">
    <location>
        <begin position="897"/>
        <end position="917"/>
    </location>
</feature>
<feature type="transmembrane region" description="Helical" evidence="1">
    <location>
        <begin position="953"/>
        <end position="973"/>
    </location>
</feature>
<feature type="transmembrane region" description="Helical" evidence="1">
    <location>
        <begin position="984"/>
        <end position="1004"/>
    </location>
</feature>
<comment type="subunit">
    <text evidence="1">Part of a tripartite efflux system composed of MdtA, MdtB and MdtC. MdtC forms a heteromultimer with MdtB.</text>
</comment>
<comment type="subcellular location">
    <subcellularLocation>
        <location evidence="1">Cell inner membrane</location>
        <topology evidence="1">Multi-pass membrane protein</topology>
    </subcellularLocation>
</comment>
<comment type="similarity">
    <text evidence="1">Belongs to the resistance-nodulation-cell division (RND) (TC 2.A.6) family. MdtC subfamily.</text>
</comment>
<comment type="sequence caution" evidence="2">
    <conflict type="erroneous initiation">
        <sequence resource="EMBL-CDS" id="BAK11890"/>
    </conflict>
    <text>Truncated N-terminus.</text>
</comment>
<dbReference type="EMBL" id="AP012032">
    <property type="protein sequence ID" value="BAK11890.1"/>
    <property type="status" value="ALT_INIT"/>
    <property type="molecule type" value="Genomic_DNA"/>
</dbReference>
<dbReference type="RefSeq" id="WP_028715330.1">
    <property type="nucleotide sequence ID" value="NC_017531.2"/>
</dbReference>
<dbReference type="SMR" id="F2EYE0"/>
<dbReference type="KEGG" id="paj:PAJ_1810"/>
<dbReference type="PATRIC" id="fig|932677.3.peg.2114"/>
<dbReference type="eggNOG" id="COG0841">
    <property type="taxonomic scope" value="Bacteria"/>
</dbReference>
<dbReference type="HOGENOM" id="CLU_002755_1_1_6"/>
<dbReference type="OrthoDB" id="9757904at2"/>
<dbReference type="Proteomes" id="UP000006690">
    <property type="component" value="Chromosome"/>
</dbReference>
<dbReference type="GO" id="GO:0005886">
    <property type="term" value="C:plasma membrane"/>
    <property type="evidence" value="ECO:0007669"/>
    <property type="project" value="UniProtKB-SubCell"/>
</dbReference>
<dbReference type="GO" id="GO:0042910">
    <property type="term" value="F:xenobiotic transmembrane transporter activity"/>
    <property type="evidence" value="ECO:0007669"/>
    <property type="project" value="TreeGrafter"/>
</dbReference>
<dbReference type="FunFam" id="1.20.1640.10:FF:000001">
    <property type="entry name" value="Efflux pump membrane transporter"/>
    <property type="match status" value="1"/>
</dbReference>
<dbReference type="FunFam" id="3.30.70.1430:FF:000001">
    <property type="entry name" value="Efflux pump membrane transporter"/>
    <property type="match status" value="1"/>
</dbReference>
<dbReference type="FunFam" id="3.30.2090.10:FF:000004">
    <property type="entry name" value="Multidrug resistance protein MdtC"/>
    <property type="match status" value="1"/>
</dbReference>
<dbReference type="Gene3D" id="3.30.70.1430">
    <property type="entry name" value="Multidrug efflux transporter AcrB pore domain"/>
    <property type="match status" value="2"/>
</dbReference>
<dbReference type="Gene3D" id="3.30.70.1440">
    <property type="entry name" value="Multidrug efflux transporter AcrB pore domain"/>
    <property type="match status" value="1"/>
</dbReference>
<dbReference type="Gene3D" id="3.30.70.1320">
    <property type="entry name" value="Multidrug efflux transporter AcrB pore domain like"/>
    <property type="match status" value="1"/>
</dbReference>
<dbReference type="Gene3D" id="3.30.2090.10">
    <property type="entry name" value="Multidrug efflux transporter AcrB TolC docking domain, DN and DC subdomains"/>
    <property type="match status" value="2"/>
</dbReference>
<dbReference type="Gene3D" id="1.20.1640.10">
    <property type="entry name" value="Multidrug efflux transporter AcrB transmembrane domain"/>
    <property type="match status" value="2"/>
</dbReference>
<dbReference type="HAMAP" id="MF_01424">
    <property type="entry name" value="MdtC"/>
    <property type="match status" value="1"/>
</dbReference>
<dbReference type="InterPro" id="IPR027463">
    <property type="entry name" value="AcrB_DN_DC_subdom"/>
</dbReference>
<dbReference type="InterPro" id="IPR001036">
    <property type="entry name" value="Acrflvin-R"/>
</dbReference>
<dbReference type="InterPro" id="IPR023931">
    <property type="entry name" value="Multidrug-R_MdtC"/>
</dbReference>
<dbReference type="NCBIfam" id="NF007905">
    <property type="entry name" value="PRK10614.1"/>
    <property type="match status" value="1"/>
</dbReference>
<dbReference type="NCBIfam" id="NF033617">
    <property type="entry name" value="RND_permease_2"/>
    <property type="match status" value="1"/>
</dbReference>
<dbReference type="PANTHER" id="PTHR32063">
    <property type="match status" value="1"/>
</dbReference>
<dbReference type="PANTHER" id="PTHR32063:SF34">
    <property type="entry name" value="MULTIDRUG RESISTANCE PROTEIN MDTC"/>
    <property type="match status" value="1"/>
</dbReference>
<dbReference type="Pfam" id="PF00873">
    <property type="entry name" value="ACR_tran"/>
    <property type="match status" value="1"/>
</dbReference>
<dbReference type="PRINTS" id="PR00702">
    <property type="entry name" value="ACRIFLAVINRP"/>
</dbReference>
<dbReference type="SUPFAM" id="SSF82693">
    <property type="entry name" value="Multidrug efflux transporter AcrB pore domain, PN1, PN2, PC1 and PC2 subdomains"/>
    <property type="match status" value="3"/>
</dbReference>
<dbReference type="SUPFAM" id="SSF82714">
    <property type="entry name" value="Multidrug efflux transporter AcrB TolC docking domain, DN and DC subdomains"/>
    <property type="match status" value="2"/>
</dbReference>
<dbReference type="SUPFAM" id="SSF82866">
    <property type="entry name" value="Multidrug efflux transporter AcrB transmembrane domain"/>
    <property type="match status" value="2"/>
</dbReference>
<accession>F2EYE0</accession>